<gene>
    <name evidence="1" type="primary">argH</name>
    <name type="ordered locus">ABO_2325</name>
</gene>
<feature type="chain" id="PRO_1000000450" description="Argininosuccinate lyase">
    <location>
        <begin position="1"/>
        <end position="464"/>
    </location>
</feature>
<comment type="catalytic activity">
    <reaction evidence="1">
        <text>2-(N(omega)-L-arginino)succinate = fumarate + L-arginine</text>
        <dbReference type="Rhea" id="RHEA:24020"/>
        <dbReference type="ChEBI" id="CHEBI:29806"/>
        <dbReference type="ChEBI" id="CHEBI:32682"/>
        <dbReference type="ChEBI" id="CHEBI:57472"/>
        <dbReference type="EC" id="4.3.2.1"/>
    </reaction>
</comment>
<comment type="pathway">
    <text evidence="1">Amino-acid biosynthesis; L-arginine biosynthesis; L-arginine from L-ornithine and carbamoyl phosphate: step 3/3.</text>
</comment>
<comment type="subcellular location">
    <subcellularLocation>
        <location evidence="1">Cytoplasm</location>
    </subcellularLocation>
</comment>
<comment type="similarity">
    <text evidence="1">Belongs to the lyase 1 family. Argininosuccinate lyase subfamily.</text>
</comment>
<dbReference type="EC" id="4.3.2.1" evidence="1"/>
<dbReference type="EMBL" id="AM286690">
    <property type="protein sequence ID" value="CAL17773.1"/>
    <property type="molecule type" value="Genomic_DNA"/>
</dbReference>
<dbReference type="RefSeq" id="WP_011589599.1">
    <property type="nucleotide sequence ID" value="NC_008260.1"/>
</dbReference>
<dbReference type="SMR" id="Q0VM25"/>
<dbReference type="STRING" id="393595.ABO_2325"/>
<dbReference type="KEGG" id="abo:ABO_2325"/>
<dbReference type="eggNOG" id="COG0165">
    <property type="taxonomic scope" value="Bacteria"/>
</dbReference>
<dbReference type="HOGENOM" id="CLU_027272_2_3_6"/>
<dbReference type="OrthoDB" id="9769623at2"/>
<dbReference type="UniPathway" id="UPA00068">
    <property type="reaction ID" value="UER00114"/>
</dbReference>
<dbReference type="Proteomes" id="UP000008871">
    <property type="component" value="Chromosome"/>
</dbReference>
<dbReference type="GO" id="GO:0005829">
    <property type="term" value="C:cytosol"/>
    <property type="evidence" value="ECO:0007669"/>
    <property type="project" value="TreeGrafter"/>
</dbReference>
<dbReference type="GO" id="GO:0004056">
    <property type="term" value="F:argininosuccinate lyase activity"/>
    <property type="evidence" value="ECO:0007669"/>
    <property type="project" value="UniProtKB-UniRule"/>
</dbReference>
<dbReference type="GO" id="GO:0042450">
    <property type="term" value="P:arginine biosynthetic process via ornithine"/>
    <property type="evidence" value="ECO:0007669"/>
    <property type="project" value="InterPro"/>
</dbReference>
<dbReference type="GO" id="GO:0006526">
    <property type="term" value="P:L-arginine biosynthetic process"/>
    <property type="evidence" value="ECO:0007669"/>
    <property type="project" value="UniProtKB-UniRule"/>
</dbReference>
<dbReference type="CDD" id="cd01359">
    <property type="entry name" value="Argininosuccinate_lyase"/>
    <property type="match status" value="1"/>
</dbReference>
<dbReference type="FunFam" id="1.10.275.10:FF:000002">
    <property type="entry name" value="Argininosuccinate lyase"/>
    <property type="match status" value="1"/>
</dbReference>
<dbReference type="FunFam" id="1.10.40.30:FF:000001">
    <property type="entry name" value="Argininosuccinate lyase"/>
    <property type="match status" value="1"/>
</dbReference>
<dbReference type="FunFam" id="1.20.200.10:FF:000015">
    <property type="entry name" value="argininosuccinate lyase isoform X2"/>
    <property type="match status" value="1"/>
</dbReference>
<dbReference type="Gene3D" id="1.10.40.30">
    <property type="entry name" value="Fumarase/aspartase (C-terminal domain)"/>
    <property type="match status" value="1"/>
</dbReference>
<dbReference type="Gene3D" id="1.20.200.10">
    <property type="entry name" value="Fumarase/aspartase (Central domain)"/>
    <property type="match status" value="1"/>
</dbReference>
<dbReference type="Gene3D" id="1.10.275.10">
    <property type="entry name" value="Fumarase/aspartase (N-terminal domain)"/>
    <property type="match status" value="1"/>
</dbReference>
<dbReference type="HAMAP" id="MF_00006">
    <property type="entry name" value="Arg_succ_lyase"/>
    <property type="match status" value="1"/>
</dbReference>
<dbReference type="InterPro" id="IPR029419">
    <property type="entry name" value="Arg_succ_lyase_C"/>
</dbReference>
<dbReference type="InterPro" id="IPR009049">
    <property type="entry name" value="Argininosuccinate_lyase"/>
</dbReference>
<dbReference type="InterPro" id="IPR024083">
    <property type="entry name" value="Fumarase/histidase_N"/>
</dbReference>
<dbReference type="InterPro" id="IPR020557">
    <property type="entry name" value="Fumarate_lyase_CS"/>
</dbReference>
<dbReference type="InterPro" id="IPR000362">
    <property type="entry name" value="Fumarate_lyase_fam"/>
</dbReference>
<dbReference type="InterPro" id="IPR022761">
    <property type="entry name" value="Fumarate_lyase_N"/>
</dbReference>
<dbReference type="InterPro" id="IPR008948">
    <property type="entry name" value="L-Aspartase-like"/>
</dbReference>
<dbReference type="NCBIfam" id="TIGR00838">
    <property type="entry name" value="argH"/>
    <property type="match status" value="1"/>
</dbReference>
<dbReference type="PANTHER" id="PTHR43814">
    <property type="entry name" value="ARGININOSUCCINATE LYASE"/>
    <property type="match status" value="1"/>
</dbReference>
<dbReference type="PANTHER" id="PTHR43814:SF1">
    <property type="entry name" value="ARGININOSUCCINATE LYASE"/>
    <property type="match status" value="1"/>
</dbReference>
<dbReference type="Pfam" id="PF14698">
    <property type="entry name" value="ASL_C2"/>
    <property type="match status" value="1"/>
</dbReference>
<dbReference type="Pfam" id="PF00206">
    <property type="entry name" value="Lyase_1"/>
    <property type="match status" value="1"/>
</dbReference>
<dbReference type="PRINTS" id="PR00145">
    <property type="entry name" value="ARGSUCLYASE"/>
</dbReference>
<dbReference type="PRINTS" id="PR00149">
    <property type="entry name" value="FUMRATELYASE"/>
</dbReference>
<dbReference type="SUPFAM" id="SSF48557">
    <property type="entry name" value="L-aspartase-like"/>
    <property type="match status" value="1"/>
</dbReference>
<dbReference type="PROSITE" id="PS00163">
    <property type="entry name" value="FUMARATE_LYASES"/>
    <property type="match status" value="1"/>
</dbReference>
<proteinExistence type="inferred from homology"/>
<accession>Q0VM25</accession>
<evidence type="ECO:0000255" key="1">
    <source>
        <dbReference type="HAMAP-Rule" id="MF_00006"/>
    </source>
</evidence>
<organism>
    <name type="scientific">Alcanivorax borkumensis (strain ATCC 700651 / DSM 11573 / NCIMB 13689 / SK2)</name>
    <dbReference type="NCBI Taxonomy" id="393595"/>
    <lineage>
        <taxon>Bacteria</taxon>
        <taxon>Pseudomonadati</taxon>
        <taxon>Pseudomonadota</taxon>
        <taxon>Gammaproteobacteria</taxon>
        <taxon>Oceanospirillales</taxon>
        <taxon>Alcanivoracaceae</taxon>
        <taxon>Alcanivorax</taxon>
    </lineage>
</organism>
<name>ARLY_ALCBS</name>
<keyword id="KW-0028">Amino-acid biosynthesis</keyword>
<keyword id="KW-0055">Arginine biosynthesis</keyword>
<keyword id="KW-0963">Cytoplasm</keyword>
<keyword id="KW-0456">Lyase</keyword>
<keyword id="KW-1185">Reference proteome</keyword>
<reference key="1">
    <citation type="journal article" date="2006" name="Nat. Biotechnol.">
        <title>Genome sequence of the ubiquitous hydrocarbon-degrading marine bacterium Alcanivorax borkumensis.</title>
        <authorList>
            <person name="Schneiker S."/>
            <person name="Martins dos Santos V.A.P."/>
            <person name="Bartels D."/>
            <person name="Bekel T."/>
            <person name="Brecht M."/>
            <person name="Buhrmester J."/>
            <person name="Chernikova T.N."/>
            <person name="Denaro R."/>
            <person name="Ferrer M."/>
            <person name="Gertler C."/>
            <person name="Goesmann A."/>
            <person name="Golyshina O.V."/>
            <person name="Kaminski F."/>
            <person name="Khachane A.N."/>
            <person name="Lang S."/>
            <person name="Linke B."/>
            <person name="McHardy A.C."/>
            <person name="Meyer F."/>
            <person name="Nechitaylo T."/>
            <person name="Puehler A."/>
            <person name="Regenhardt D."/>
            <person name="Rupp O."/>
            <person name="Sabirova J.S."/>
            <person name="Selbitschka W."/>
            <person name="Yakimov M.M."/>
            <person name="Timmis K.N."/>
            <person name="Vorhoelter F.-J."/>
            <person name="Weidner S."/>
            <person name="Kaiser O."/>
            <person name="Golyshin P.N."/>
        </authorList>
    </citation>
    <scope>NUCLEOTIDE SEQUENCE [LARGE SCALE GENOMIC DNA]</scope>
    <source>
        <strain>ATCC 700651 / DSM 11573 / NCIMB 13689 / SK2</strain>
    </source>
</reference>
<sequence length="464" mass="52247">MTDKQQNKLWGGRFSESTDQFVQEFTASVNFDRRMYRQDIYGSQAHATMLAEVGVLTDEERDAIIVGLREIQLEIENGEFQWSVALEDVHMNIEARLTDKIGITGKKLHTGRSRNDQVATDIRLWLRDELLILEEQFLHLMQGLLNLAEREAATIMPGFTHLQTAQPVTFGHHLLAWFEMLKRDRERLLDCKKRVNRMPLGAAALAGTTYPINRERTCELLGFDGVCENSLDAVSDRDFAIEFCAMAALTMTHLSRISEELVLWTSAQFNFINLPDRFCTGSSIMPQKKNPDVPELVRGKTGRVNGHLISLLTLMKSQPLAYNKDNQEDKEPLYDAVDTLKGSLRAFGDMIPALEPNREVMREAARRGFATATDLADYLVRKGIAFRDSHEIVGKAVAYGVEKKKDLGDMSLSELKQFSDQIEDNVFEVLTLEGSVSARNHIGGTAPDQVRAAVARAREALDNT</sequence>
<protein>
    <recommendedName>
        <fullName evidence="1">Argininosuccinate lyase</fullName>
        <shortName evidence="1">ASAL</shortName>
        <ecNumber evidence="1">4.3.2.1</ecNumber>
    </recommendedName>
    <alternativeName>
        <fullName evidence="1">Arginosuccinase</fullName>
    </alternativeName>
</protein>